<organism>
    <name type="scientific">Mus musculus</name>
    <name type="common">Mouse</name>
    <dbReference type="NCBI Taxonomy" id="10090"/>
    <lineage>
        <taxon>Eukaryota</taxon>
        <taxon>Metazoa</taxon>
        <taxon>Chordata</taxon>
        <taxon>Craniata</taxon>
        <taxon>Vertebrata</taxon>
        <taxon>Euteleostomi</taxon>
        <taxon>Mammalia</taxon>
        <taxon>Eutheria</taxon>
        <taxon>Euarchontoglires</taxon>
        <taxon>Glires</taxon>
        <taxon>Rodentia</taxon>
        <taxon>Myomorpha</taxon>
        <taxon>Muroidea</taxon>
        <taxon>Muridae</taxon>
        <taxon>Murinae</taxon>
        <taxon>Mus</taxon>
        <taxon>Mus</taxon>
    </lineage>
</organism>
<feature type="chain" id="PRO_0000106293" description="Fanconi anemia group G protein homolog">
    <location>
        <begin position="1"/>
        <end position="623"/>
    </location>
</feature>
<feature type="repeat" description="TPR 1">
    <location>
        <begin position="251"/>
        <end position="284"/>
    </location>
</feature>
<feature type="repeat" description="TPR 2">
    <location>
        <begin position="349"/>
        <end position="382"/>
    </location>
</feature>
<feature type="repeat" description="TPR 3">
    <location>
        <begin position="458"/>
        <end position="491"/>
    </location>
</feature>
<feature type="repeat" description="TPR 4">
    <location>
        <begin position="517"/>
        <end position="550"/>
    </location>
</feature>
<dbReference type="EMBL" id="AF112439">
    <property type="protein sequence ID" value="AAG43198.1"/>
    <property type="molecule type" value="mRNA"/>
</dbReference>
<dbReference type="EMBL" id="AY049715">
    <property type="protein sequence ID" value="AAL12165.1"/>
    <property type="molecule type" value="mRNA"/>
</dbReference>
<dbReference type="EMBL" id="AL672276">
    <property type="status" value="NOT_ANNOTATED_CDS"/>
    <property type="molecule type" value="Genomic_DNA"/>
</dbReference>
<dbReference type="CCDS" id="CCDS18087.1"/>
<dbReference type="RefSeq" id="NP_001156705.1">
    <property type="nucleotide sequence ID" value="NM_001163233.1"/>
</dbReference>
<dbReference type="RefSeq" id="NP_001413127.1">
    <property type="nucleotide sequence ID" value="NM_001426198.1"/>
</dbReference>
<dbReference type="RefSeq" id="NP_001413128.1">
    <property type="nucleotide sequence ID" value="NM_001426199.1"/>
</dbReference>
<dbReference type="RefSeq" id="NP_444311.1">
    <property type="nucleotide sequence ID" value="NM_053081.3"/>
</dbReference>
<dbReference type="RefSeq" id="XP_006538190.1">
    <property type="nucleotide sequence ID" value="XM_006538127.2"/>
</dbReference>
<dbReference type="RefSeq" id="XP_006538191.1">
    <property type="nucleotide sequence ID" value="XM_006538128.2"/>
</dbReference>
<dbReference type="SMR" id="Q9EQR6"/>
<dbReference type="BioGRID" id="208603">
    <property type="interactions" value="1"/>
</dbReference>
<dbReference type="FunCoup" id="Q9EQR6">
    <property type="interactions" value="2214"/>
</dbReference>
<dbReference type="STRING" id="10090.ENSMUSP00000030165"/>
<dbReference type="iPTMnet" id="Q9EQR6"/>
<dbReference type="PhosphoSitePlus" id="Q9EQR6"/>
<dbReference type="jPOST" id="Q9EQR6"/>
<dbReference type="PaxDb" id="10090-ENSMUSP00000030165"/>
<dbReference type="ProteomicsDB" id="277040"/>
<dbReference type="Pumba" id="Q9EQR6"/>
<dbReference type="Antibodypedia" id="25694">
    <property type="antibodies" value="440 antibodies from 36 providers"/>
</dbReference>
<dbReference type="DNASU" id="60534"/>
<dbReference type="Ensembl" id="ENSMUST00000030165.5">
    <property type="protein sequence ID" value="ENSMUSP00000030165.5"/>
    <property type="gene ID" value="ENSMUSG00000028453.11"/>
</dbReference>
<dbReference type="GeneID" id="60534"/>
<dbReference type="KEGG" id="mmu:60534"/>
<dbReference type="UCSC" id="uc008sos.2">
    <property type="organism name" value="mouse"/>
</dbReference>
<dbReference type="AGR" id="MGI:1926471"/>
<dbReference type="CTD" id="2189"/>
<dbReference type="MGI" id="MGI:1926471">
    <property type="gene designation" value="Fancg"/>
</dbReference>
<dbReference type="VEuPathDB" id="HostDB:ENSMUSG00000028453"/>
<dbReference type="eggNOG" id="ENOG502QVUI">
    <property type="taxonomic scope" value="Eukaryota"/>
</dbReference>
<dbReference type="GeneTree" id="ENSGT00390000007195"/>
<dbReference type="HOGENOM" id="CLU_018870_0_0_1"/>
<dbReference type="InParanoid" id="Q9EQR6"/>
<dbReference type="OMA" id="CCLAWRA"/>
<dbReference type="OrthoDB" id="6355951at2759"/>
<dbReference type="PhylomeDB" id="Q9EQR6"/>
<dbReference type="TreeFam" id="TF330722"/>
<dbReference type="Reactome" id="R-MMU-6783310">
    <property type="pathway name" value="Fanconi Anemia Pathway"/>
</dbReference>
<dbReference type="Reactome" id="R-MMU-9833482">
    <property type="pathway name" value="PKR-mediated signaling"/>
</dbReference>
<dbReference type="BioGRID-ORCS" id="60534">
    <property type="hits" value="36 hits in 114 CRISPR screens"/>
</dbReference>
<dbReference type="ChiTaRS" id="Fancg">
    <property type="organism name" value="mouse"/>
</dbReference>
<dbReference type="PRO" id="PR:Q9EQR6"/>
<dbReference type="Proteomes" id="UP000000589">
    <property type="component" value="Chromosome 4"/>
</dbReference>
<dbReference type="RNAct" id="Q9EQR6">
    <property type="molecule type" value="protein"/>
</dbReference>
<dbReference type="Bgee" id="ENSMUSG00000028453">
    <property type="expression patterns" value="Expressed in spermatocyte and 178 other cell types or tissues"/>
</dbReference>
<dbReference type="GO" id="GO:0000785">
    <property type="term" value="C:chromatin"/>
    <property type="evidence" value="ECO:0007669"/>
    <property type="project" value="Ensembl"/>
</dbReference>
<dbReference type="GO" id="GO:0043240">
    <property type="term" value="C:Fanconi anaemia nuclear complex"/>
    <property type="evidence" value="ECO:0000250"/>
    <property type="project" value="UniProtKB"/>
</dbReference>
<dbReference type="GO" id="GO:0005739">
    <property type="term" value="C:mitochondrion"/>
    <property type="evidence" value="ECO:0007669"/>
    <property type="project" value="Ensembl"/>
</dbReference>
<dbReference type="GO" id="GO:0016607">
    <property type="term" value="C:nuclear speck"/>
    <property type="evidence" value="ECO:0007669"/>
    <property type="project" value="Ensembl"/>
</dbReference>
<dbReference type="GO" id="GO:0006974">
    <property type="term" value="P:DNA damage response"/>
    <property type="evidence" value="ECO:0000315"/>
    <property type="project" value="MGI"/>
</dbReference>
<dbReference type="GO" id="GO:0036297">
    <property type="term" value="P:interstrand cross-link repair"/>
    <property type="evidence" value="ECO:0007669"/>
    <property type="project" value="InterPro"/>
</dbReference>
<dbReference type="GO" id="GO:0007005">
    <property type="term" value="P:mitochondrion organization"/>
    <property type="evidence" value="ECO:0007669"/>
    <property type="project" value="Ensembl"/>
</dbReference>
<dbReference type="GO" id="GO:0001541">
    <property type="term" value="P:ovarian follicle development"/>
    <property type="evidence" value="ECO:0000315"/>
    <property type="project" value="MGI"/>
</dbReference>
<dbReference type="GO" id="GO:0009314">
    <property type="term" value="P:response to radiation"/>
    <property type="evidence" value="ECO:0000315"/>
    <property type="project" value="MGI"/>
</dbReference>
<dbReference type="GO" id="GO:0007286">
    <property type="term" value="P:spermatid development"/>
    <property type="evidence" value="ECO:0000315"/>
    <property type="project" value="MGI"/>
</dbReference>
<dbReference type="FunFam" id="1.25.40.10:FF:000750">
    <property type="entry name" value="Fanconi anemia group G protein"/>
    <property type="match status" value="1"/>
</dbReference>
<dbReference type="Gene3D" id="1.25.40.10">
    <property type="entry name" value="Tetratricopeptide repeat domain"/>
    <property type="match status" value="1"/>
</dbReference>
<dbReference type="InterPro" id="IPR039684">
    <property type="entry name" value="FANCG"/>
</dbReference>
<dbReference type="InterPro" id="IPR011990">
    <property type="entry name" value="TPR-like_helical_dom_sf"/>
</dbReference>
<dbReference type="InterPro" id="IPR019734">
    <property type="entry name" value="TPR_rpt"/>
</dbReference>
<dbReference type="PANTHER" id="PTHR15254:SF2">
    <property type="entry name" value="FANCONI ANEMIA GROUP G PROTEIN"/>
    <property type="match status" value="1"/>
</dbReference>
<dbReference type="PANTHER" id="PTHR15254">
    <property type="entry name" value="FANCONI ANEMIA GROUP G PROTEIN FAMILY MEMBER"/>
    <property type="match status" value="1"/>
</dbReference>
<dbReference type="SMART" id="SM00028">
    <property type="entry name" value="TPR"/>
    <property type="match status" value="3"/>
</dbReference>
<dbReference type="SUPFAM" id="SSF48452">
    <property type="entry name" value="TPR-like"/>
    <property type="match status" value="2"/>
</dbReference>
<dbReference type="PROSITE" id="PS50293">
    <property type="entry name" value="TPR_REGION"/>
    <property type="match status" value="1"/>
</dbReference>
<protein>
    <recommendedName>
        <fullName>Fanconi anemia group G protein homolog</fullName>
        <shortName>Protein FACG</shortName>
    </recommendedName>
</protein>
<sequence>MSSQVIPALPKTFSSSLDLWREKNDQLVRQAKQLTRDSRPSLRRQQSAQDTLEGLRELLLTLQGLPAAVPALPLELTVLCNCIILRASLVQAFTEDLTQDLQRGLERVLEAQHHLEPKSQQGLKELWHSVLSASSLPPELLPALHCLASLQAVFWMSTDHLEDLTLLLQTLNGSQTQSSEDLLLLLKSWSPPAEESPAPLILQDAESLRDVLLTAFACRQGFQELITGSLPHAQSNLHEAASGLCPPSVLVQVYTALGACLRKMGNPQRALLYLTEALKVGTTCALPLLEASRVYRQLGDRAAELESLELLVEALSATHSSETFKSLIEVELLLPQPDPASPLHCGTQSQAKHLLASRCLQTGRAEDAAEHYLDLLAMLLGGSETRFSPPTSSLGPCIPELCLEAAAALIQAGRALDALTVCEELLNRTSSLLPKMSSLWENARKRAKELPCCPVWVSATHLLQGQAWSQLKAQKEALSEFSQCLELLFRTLPEDKEQGSDCEQKCRSDVALKQLRVAALISRGLEWVASGQDTKALSDFLLSVQICPGNRDGSFYLLQTLKRLDRKNEASAFWREAHSQLPLEDAAGSLPLYLETCLSWIHPPNREAFLEEFGTSVLESCVL</sequence>
<reference key="1">
    <citation type="journal article" date="2000" name="Eur. J. Hum. Genet.">
        <title>Spectrum of mutations in the Fanconi anaemia group G gene, FANCG/XRCC9.</title>
        <authorList>
            <person name="Demuth I."/>
            <person name="Wlodarski M."/>
            <person name="Tipping A.J."/>
            <person name="Morgan N.V."/>
            <person name="de Winter J.P."/>
            <person name="Thiel M."/>
            <person name="Grasl S."/>
            <person name="Schindler D."/>
            <person name="D'Andrea A.D."/>
            <person name="Altay C."/>
            <person name="Kayserili H."/>
            <person name="Zatterale A."/>
            <person name="Kunze J."/>
            <person name="Ebell W."/>
            <person name="Mathew C.G."/>
            <person name="Joenje H."/>
            <person name="Sperling K."/>
            <person name="Digweed M."/>
        </authorList>
    </citation>
    <scope>NUCLEOTIDE SEQUENCE [MRNA]</scope>
</reference>
<reference key="2">
    <citation type="journal article" date="2002" name="Genes Cells">
        <title>Characterization, expression and complex formation of the murine Fanconi anaemia gene product Fancg.</title>
        <authorList>
            <person name="van de Vrugt H.J."/>
            <person name="Koomen M."/>
            <person name="Berns M.A."/>
            <person name="de Vries Y."/>
            <person name="Rooimans M.A."/>
            <person name="van der Weel L."/>
            <person name="Blom E."/>
            <person name="de Groot J."/>
            <person name="Schepers R.J."/>
            <person name="Stone S."/>
            <person name="Hoatlin M.E."/>
            <person name="Cheng N.C."/>
            <person name="Joenje H."/>
            <person name="Arwert F."/>
        </authorList>
    </citation>
    <scope>NUCLEOTIDE SEQUENCE [MRNA]</scope>
    <scope>SUBCELLULAR LOCATION</scope>
    <scope>TISSUE SPECIFICITY</scope>
    <source>
        <strain>FVB/NJ</strain>
    </source>
</reference>
<reference key="3">
    <citation type="journal article" date="2009" name="PLoS Biol.">
        <title>Lineage-specific biology revealed by a finished genome assembly of the mouse.</title>
        <authorList>
            <person name="Church D.M."/>
            <person name="Goodstadt L."/>
            <person name="Hillier L.W."/>
            <person name="Zody M.C."/>
            <person name="Goldstein S."/>
            <person name="She X."/>
            <person name="Bult C.J."/>
            <person name="Agarwala R."/>
            <person name="Cherry J.L."/>
            <person name="DiCuccio M."/>
            <person name="Hlavina W."/>
            <person name="Kapustin Y."/>
            <person name="Meric P."/>
            <person name="Maglott D."/>
            <person name="Birtle Z."/>
            <person name="Marques A.C."/>
            <person name="Graves T."/>
            <person name="Zhou S."/>
            <person name="Teague B."/>
            <person name="Potamousis K."/>
            <person name="Churas C."/>
            <person name="Place M."/>
            <person name="Herschleb J."/>
            <person name="Runnheim R."/>
            <person name="Forrest D."/>
            <person name="Amos-Landgraf J."/>
            <person name="Schwartz D.C."/>
            <person name="Cheng Z."/>
            <person name="Lindblad-Toh K."/>
            <person name="Eichler E.E."/>
            <person name="Ponting C.P."/>
        </authorList>
    </citation>
    <scope>NUCLEOTIDE SEQUENCE [LARGE SCALE GENOMIC DNA]</scope>
    <source>
        <strain>C57BL/6J</strain>
    </source>
</reference>
<gene>
    <name type="primary">Fancg</name>
</gene>
<accession>Q9EQR6</accession>
<accession>A2AG34</accession>
<evidence type="ECO:0000250" key="1"/>
<evidence type="ECO:0000269" key="2">
    <source>
    </source>
</evidence>
<name>FANCG_MOUSE</name>
<keyword id="KW-0227">DNA damage</keyword>
<keyword id="KW-0234">DNA repair</keyword>
<keyword id="KW-0539">Nucleus</keyword>
<keyword id="KW-1185">Reference proteome</keyword>
<keyword id="KW-0677">Repeat</keyword>
<keyword id="KW-0802">TPR repeat</keyword>
<comment type="function">
    <text evidence="1">DNA repair protein that may operate in a postreplication repair or a cell cycle checkpoint function. May be implicated in interstrand DNA cross-link repair and in the maintenance of normal chromosome stability. Candidate tumor suppressor gene (By similarity).</text>
</comment>
<comment type="subunit">
    <text evidence="1">Belongs to the multisubunit FA complex composed of FANCA, FANCB, FANCC, FANCE, FANCF, FANCG, FANCL/PHF9 and FANCM. In complex with FANCF, FANCA and FANCL, but not with FANCC, nor FANCE, interacts with HES1; this interaction may be essential for the stability and nuclear localization of FA core complex proteins. The complex with FANCC and FANCG may also include EIF2AK2 and HSP70.</text>
</comment>
<comment type="subcellular location">
    <subcellularLocation>
        <location evidence="2">Nucleus</location>
    </subcellularLocation>
</comment>
<comment type="tissue specificity">
    <text evidence="2">Highest expression levels in spleen, thymus and testis.</text>
</comment>
<proteinExistence type="evidence at transcript level"/>